<organism>
    <name type="scientific">Paracoccus sp. (strain N81106 / MBIC 01143)</name>
    <name type="common">Agrobacterium aurantiacum</name>
    <dbReference type="NCBI Taxonomy" id="81397"/>
    <lineage>
        <taxon>Bacteria</taxon>
        <taxon>Pseudomonadati</taxon>
        <taxon>Pseudomonadota</taxon>
        <taxon>Alphaproteobacteria</taxon>
        <taxon>Rhodobacterales</taxon>
        <taxon>Paracoccaceae</taxon>
        <taxon>Paracoccus</taxon>
    </lineage>
</organism>
<comment type="function">
    <text>Converts beta-carotene to canthaxanthin via echinenone.</text>
</comment>
<comment type="catalytic activity">
    <reaction>
        <text>all-trans-beta-carotene + 2 AH2 + 2 O2 = echinenone + 2 A + 3 H2O</text>
        <dbReference type="Rhea" id="RHEA:55660"/>
        <dbReference type="ChEBI" id="CHEBI:4746"/>
        <dbReference type="ChEBI" id="CHEBI:13193"/>
        <dbReference type="ChEBI" id="CHEBI:15377"/>
        <dbReference type="ChEBI" id="CHEBI:15379"/>
        <dbReference type="ChEBI" id="CHEBI:17499"/>
        <dbReference type="ChEBI" id="CHEBI:17579"/>
        <dbReference type="EC" id="1.14.99.63"/>
    </reaction>
</comment>
<comment type="catalytic activity">
    <reaction>
        <text>echinenone + 2 AH2 + 2 O2 = canthaxanthin + 2 A + 3 H2O</text>
        <dbReference type="Rhea" id="RHEA:55664"/>
        <dbReference type="ChEBI" id="CHEBI:3362"/>
        <dbReference type="ChEBI" id="CHEBI:4746"/>
        <dbReference type="ChEBI" id="CHEBI:13193"/>
        <dbReference type="ChEBI" id="CHEBI:15377"/>
        <dbReference type="ChEBI" id="CHEBI:15379"/>
        <dbReference type="ChEBI" id="CHEBI:17499"/>
        <dbReference type="EC" id="1.14.99.63"/>
    </reaction>
</comment>
<comment type="pathway">
    <text>Carotenoid biosynthesis; astaxanthin biosynthesis.</text>
</comment>
<dbReference type="EC" id="1.14.99.63"/>
<dbReference type="EMBL" id="D58420">
    <property type="protein sequence ID" value="BAA09591.1"/>
    <property type="molecule type" value="Genomic_DNA"/>
</dbReference>
<dbReference type="EMBL" id="AB206672">
    <property type="protein sequence ID" value="BAE47465.1"/>
    <property type="molecule type" value="Genomic_DNA"/>
</dbReference>
<dbReference type="BRENDA" id="1.14.11.B16">
    <property type="organism ID" value="12605"/>
</dbReference>
<dbReference type="BRENDA" id="1.14.99.63">
    <property type="organism ID" value="15358"/>
</dbReference>
<dbReference type="UniPathway" id="UPA00387"/>
<dbReference type="GO" id="GO:0016491">
    <property type="term" value="F:oxidoreductase activity"/>
    <property type="evidence" value="ECO:0007669"/>
    <property type="project" value="UniProtKB-KW"/>
</dbReference>
<dbReference type="GO" id="GO:0016117">
    <property type="term" value="P:carotenoid biosynthetic process"/>
    <property type="evidence" value="ECO:0007669"/>
    <property type="project" value="UniProtKB-KW"/>
</dbReference>
<dbReference type="CDD" id="cd03513">
    <property type="entry name" value="CrtW_beta-carotene-ketolase"/>
    <property type="match status" value="1"/>
</dbReference>
<dbReference type="InterPro" id="IPR005804">
    <property type="entry name" value="FA_desaturase_dom"/>
</dbReference>
<dbReference type="Pfam" id="PF00487">
    <property type="entry name" value="FA_desaturase"/>
    <property type="match status" value="1"/>
</dbReference>
<protein>
    <recommendedName>
        <fullName>Beta-carotene ketolase</fullName>
        <ecNumber>1.14.99.63</ecNumber>
    </recommendedName>
    <alternativeName>
        <fullName>Beta-carotene oxygenase</fullName>
    </alternativeName>
</protein>
<proteinExistence type="predicted"/>
<keyword id="KW-0125">Carotenoid biosynthesis</keyword>
<keyword id="KW-0560">Oxidoreductase</keyword>
<sequence>MSAHALPKADLTATSLIVSGGIIAAWLALHVHALWFLDAAAHPILAIANFLGLTWLSVGLFIIAHDAMHGSVVPGRPRANAAMGQLVLWLYAGFSWRKMIVKHMAHHRHAGTDDDPDFDHGGPVRWYARFIGTYFGWREGLLLPVIVTVYALILGDRWMYVVFWPLPSILASIQLFVFGTWLPHRPGHDAFPDRHNARSSRISDPVSLLTCFHFGGYHHEHHLHPTVPWWRLPSTRTKGDTA</sequence>
<name>CRTW_PARSN</name>
<feature type="chain" id="PRO_0000079370" description="Beta-carotene ketolase">
    <location>
        <begin position="1"/>
        <end position="242"/>
    </location>
</feature>
<reference key="1">
    <citation type="journal article" date="1995" name="J. Bacteriol.">
        <title>Structure and functional analysis of a marine bacterial carotenoid biosynthesis gene cluster and astaxanthin biosynthetic pathway proposed at the gene level.</title>
        <authorList>
            <person name="Misawa N."/>
            <person name="Satomi Y."/>
            <person name="Kondo K."/>
            <person name="Yokoyama A."/>
            <person name="Kajiwara S."/>
            <person name="Saito T."/>
            <person name="Ohtani T."/>
            <person name="Miki W."/>
        </authorList>
    </citation>
    <scope>NUCLEOTIDE SEQUENCE [GENOMIC DNA]</scope>
</reference>
<reference key="2">
    <citation type="submission" date="2005-03" db="EMBL/GenBank/DDBJ databases">
        <title>Structure of the complete carotenoid biosynthesis gene cluster of Paracoccus sp. strain N81106.</title>
        <authorList>
            <person name="Maruyama T."/>
            <person name="Inomata Y."/>
            <person name="Haga M."/>
            <person name="Ide T."/>
            <person name="Misawa N."/>
        </authorList>
    </citation>
    <scope>NUCLEOTIDE SEQUENCE [GENOMIC DNA]</scope>
</reference>
<accession>P54972</accession>
<accession>Q33DU0</accession>
<gene>
    <name type="primary">crtW</name>
</gene>